<sequence>MGKITFYEDRGFQGRHYECSSDCPNLQPYFSRCNSIRVDSGCWMLYERPNYQGHQYFLRRGDYPDYQQWLGFSDSIRSCCLIPQTSSHRLRLYEREDHKGLMVELSEDCSCIQDRFHLSEVRSVHVLEGCWVLYEMPNYLGRQYLLRPQEYRRYHDWGAMDAKAGSLRRVVDLY</sequence>
<organism>
    <name type="scientific">Canis lupus familiaris</name>
    <name type="common">Dog</name>
    <name type="synonym">Canis familiaris</name>
    <dbReference type="NCBI Taxonomy" id="9615"/>
    <lineage>
        <taxon>Eukaryota</taxon>
        <taxon>Metazoa</taxon>
        <taxon>Chordata</taxon>
        <taxon>Craniata</taxon>
        <taxon>Vertebrata</taxon>
        <taxon>Euteleostomi</taxon>
        <taxon>Mammalia</taxon>
        <taxon>Eutheria</taxon>
        <taxon>Laurasiatheria</taxon>
        <taxon>Carnivora</taxon>
        <taxon>Caniformia</taxon>
        <taxon>Canidae</taxon>
        <taxon>Canis</taxon>
    </lineage>
</organism>
<proteinExistence type="evidence at transcript level"/>
<gene>
    <name type="primary">CRYGC</name>
</gene>
<comment type="function">
    <text evidence="1">Crystallins are the dominant structural components of the vertebrate eye lens.</text>
</comment>
<comment type="subunit">
    <text evidence="1">Monomer.</text>
</comment>
<comment type="domain">
    <text>Has a two-domain beta-structure, folded into four very similar Greek key motifs.</text>
</comment>
<comment type="similarity">
    <text evidence="3">Belongs to the beta/gamma-crystallin family.</text>
</comment>
<feature type="chain" id="PRO_0000289595" description="Gamma-crystallin C">
    <location>
        <begin position="1"/>
        <end position="174"/>
    </location>
</feature>
<feature type="domain" description="Beta/gamma crystallin 'Greek key' 1" evidence="2">
    <location>
        <begin position="2"/>
        <end position="40"/>
    </location>
</feature>
<feature type="domain" description="Beta/gamma crystallin 'Greek key' 2" evidence="2">
    <location>
        <begin position="41"/>
        <end position="83"/>
    </location>
</feature>
<feature type="domain" description="Beta/gamma crystallin 'Greek key' 3" evidence="2">
    <location>
        <begin position="88"/>
        <end position="128"/>
    </location>
</feature>
<feature type="domain" description="Beta/gamma crystallin 'Greek key' 4" evidence="2">
    <location>
        <begin position="129"/>
        <end position="171"/>
    </location>
</feature>
<feature type="region of interest" description="Connecting peptide">
    <location>
        <begin position="84"/>
        <end position="87"/>
    </location>
</feature>
<feature type="modified residue" description="S-methylcysteine" evidence="1">
    <location>
        <position position="23"/>
    </location>
</feature>
<accession>A3RLE2</accession>
<dbReference type="EMBL" id="EF426309">
    <property type="protein sequence ID" value="ABO14694.1"/>
    <property type="molecule type" value="mRNA"/>
</dbReference>
<dbReference type="RefSeq" id="NP_001076069.1">
    <property type="nucleotide sequence ID" value="NM_001082600.1"/>
</dbReference>
<dbReference type="SMR" id="A3RLE2"/>
<dbReference type="FunCoup" id="A3RLE2">
    <property type="interactions" value="39"/>
</dbReference>
<dbReference type="STRING" id="9615.ENSCAFP00000020000"/>
<dbReference type="PaxDb" id="9612-ENSCAFP00000037656"/>
<dbReference type="Ensembl" id="ENSCAFT00000043262.3">
    <property type="protein sequence ID" value="ENSCAFP00000037656.1"/>
    <property type="gene ID" value="ENSCAFG00000052904.1"/>
</dbReference>
<dbReference type="Ensembl" id="ENSCAFT00030020807.1">
    <property type="protein sequence ID" value="ENSCAFP00030018149.1"/>
    <property type="gene ID" value="ENSCAFG00030011216.1"/>
</dbReference>
<dbReference type="Ensembl" id="ENSCAFT00040048300.1">
    <property type="protein sequence ID" value="ENSCAFP00040042184.1"/>
    <property type="gene ID" value="ENSCAFG00040025842.1"/>
</dbReference>
<dbReference type="GeneID" id="100126770"/>
<dbReference type="CTD" id="1420"/>
<dbReference type="eggNOG" id="ENOG502RXJY">
    <property type="taxonomic scope" value="Eukaryota"/>
</dbReference>
<dbReference type="HOGENOM" id="CLU_081883_1_1_1"/>
<dbReference type="InParanoid" id="A3RLE2"/>
<dbReference type="OMA" id="DDCSCIQ"/>
<dbReference type="OrthoDB" id="8407241at2759"/>
<dbReference type="Proteomes" id="UP000002254">
    <property type="component" value="Chromosome 37"/>
</dbReference>
<dbReference type="Proteomes" id="UP000694429">
    <property type="component" value="Chromosome 37"/>
</dbReference>
<dbReference type="Proteomes" id="UP000694542">
    <property type="component" value="Chromosome 37"/>
</dbReference>
<dbReference type="Proteomes" id="UP000805418">
    <property type="component" value="Unplaced"/>
</dbReference>
<dbReference type="Bgee" id="ENSCAFG00000013590">
    <property type="expression patterns" value="Expressed in occipital cortex and 28 other cell types or tissues"/>
</dbReference>
<dbReference type="GO" id="GO:0005212">
    <property type="term" value="F:structural constituent of eye lens"/>
    <property type="evidence" value="ECO:0000318"/>
    <property type="project" value="GO_Central"/>
</dbReference>
<dbReference type="GO" id="GO:0002088">
    <property type="term" value="P:lens development in camera-type eye"/>
    <property type="evidence" value="ECO:0000318"/>
    <property type="project" value="GO_Central"/>
</dbReference>
<dbReference type="GO" id="GO:0007601">
    <property type="term" value="P:visual perception"/>
    <property type="evidence" value="ECO:0000318"/>
    <property type="project" value="GO_Central"/>
</dbReference>
<dbReference type="FunFam" id="2.60.20.10:FF:000001">
    <property type="entry name" value="Crystallin gamma S"/>
    <property type="match status" value="1"/>
</dbReference>
<dbReference type="FunFam" id="2.60.20.10:FF:000003">
    <property type="entry name" value="Crystallin gamma S"/>
    <property type="match status" value="1"/>
</dbReference>
<dbReference type="Gene3D" id="2.60.20.10">
    <property type="entry name" value="Crystallins"/>
    <property type="match status" value="2"/>
</dbReference>
<dbReference type="InterPro" id="IPR050252">
    <property type="entry name" value="Beta/Gamma-Crystallin"/>
</dbReference>
<dbReference type="InterPro" id="IPR001064">
    <property type="entry name" value="Beta/gamma_crystallin"/>
</dbReference>
<dbReference type="InterPro" id="IPR011024">
    <property type="entry name" value="G_crystallin-like"/>
</dbReference>
<dbReference type="PANTHER" id="PTHR11818">
    <property type="entry name" value="BETA/GAMMA CRYSTALLIN"/>
    <property type="match status" value="1"/>
</dbReference>
<dbReference type="PANTHER" id="PTHR11818:SF32">
    <property type="entry name" value="GAMMA-CRYSTALLIN C"/>
    <property type="match status" value="1"/>
</dbReference>
<dbReference type="Pfam" id="PF00030">
    <property type="entry name" value="Crystall"/>
    <property type="match status" value="2"/>
</dbReference>
<dbReference type="PRINTS" id="PR01367">
    <property type="entry name" value="BGCRYSTALLIN"/>
</dbReference>
<dbReference type="SMART" id="SM00247">
    <property type="entry name" value="XTALbg"/>
    <property type="match status" value="2"/>
</dbReference>
<dbReference type="SUPFAM" id="SSF49695">
    <property type="entry name" value="gamma-Crystallin-like"/>
    <property type="match status" value="1"/>
</dbReference>
<dbReference type="PROSITE" id="PS50915">
    <property type="entry name" value="CRYSTALLIN_BETA_GAMMA"/>
    <property type="match status" value="4"/>
</dbReference>
<name>CRGC_CANLF</name>
<reference key="1">
    <citation type="submission" date="2007-02" db="EMBL/GenBank/DDBJ databases">
        <title>Dog gammaC-crystallin.</title>
        <authorList>
            <person name="Wistow G."/>
        </authorList>
    </citation>
    <scope>NUCLEOTIDE SEQUENCE [MRNA]</scope>
    <source>
        <tissue>Lens</tissue>
    </source>
</reference>
<keyword id="KW-0273">Eye lens protein</keyword>
<keyword id="KW-0488">Methylation</keyword>
<keyword id="KW-1185">Reference proteome</keyword>
<keyword id="KW-0677">Repeat</keyword>
<protein>
    <recommendedName>
        <fullName>Gamma-crystallin C</fullName>
    </recommendedName>
    <alternativeName>
        <fullName>Gamma-C-crystallin</fullName>
    </alternativeName>
</protein>
<evidence type="ECO:0000250" key="1"/>
<evidence type="ECO:0000255" key="2">
    <source>
        <dbReference type="PROSITE-ProRule" id="PRU00028"/>
    </source>
</evidence>
<evidence type="ECO:0000305" key="3"/>